<accession>Q393P5</accession>
<evidence type="ECO:0000255" key="1">
    <source>
        <dbReference type="HAMAP-Rule" id="MF_01527"/>
    </source>
</evidence>
<name>GCH42_BURL3</name>
<dbReference type="EC" id="3.5.4.16" evidence="1"/>
<dbReference type="EMBL" id="CP000152">
    <property type="protein sequence ID" value="ABB12321.1"/>
    <property type="molecule type" value="Genomic_DNA"/>
</dbReference>
<dbReference type="SMR" id="Q393P5"/>
<dbReference type="KEGG" id="bur:Bcep18194_B2210"/>
<dbReference type="HOGENOM" id="CLU_062816_1_1_4"/>
<dbReference type="UniPathway" id="UPA00848">
    <property type="reaction ID" value="UER00151"/>
</dbReference>
<dbReference type="Proteomes" id="UP000002705">
    <property type="component" value="Chromosome 2"/>
</dbReference>
<dbReference type="GO" id="GO:0003934">
    <property type="term" value="F:GTP cyclohydrolase I activity"/>
    <property type="evidence" value="ECO:0007669"/>
    <property type="project" value="UniProtKB-UniRule"/>
</dbReference>
<dbReference type="GO" id="GO:0046654">
    <property type="term" value="P:tetrahydrofolate biosynthetic process"/>
    <property type="evidence" value="ECO:0007669"/>
    <property type="project" value="UniProtKB-UniRule"/>
</dbReference>
<dbReference type="Gene3D" id="3.10.270.10">
    <property type="entry name" value="Urate Oxidase"/>
    <property type="match status" value="1"/>
</dbReference>
<dbReference type="HAMAP" id="MF_01527_B">
    <property type="entry name" value="GTP_cyclohydrol_B"/>
    <property type="match status" value="1"/>
</dbReference>
<dbReference type="InterPro" id="IPR022838">
    <property type="entry name" value="GTP_cyclohydrolase_FolE2"/>
</dbReference>
<dbReference type="InterPro" id="IPR003801">
    <property type="entry name" value="GTP_cyclohydrolase_FolE2/MptA"/>
</dbReference>
<dbReference type="NCBIfam" id="NF010200">
    <property type="entry name" value="PRK13674.1-1"/>
    <property type="match status" value="1"/>
</dbReference>
<dbReference type="PANTHER" id="PTHR36445">
    <property type="entry name" value="GTP CYCLOHYDROLASE MPTA"/>
    <property type="match status" value="1"/>
</dbReference>
<dbReference type="PANTHER" id="PTHR36445:SF1">
    <property type="entry name" value="GTP CYCLOHYDROLASE MPTA"/>
    <property type="match status" value="1"/>
</dbReference>
<dbReference type="Pfam" id="PF02649">
    <property type="entry name" value="GCHY-1"/>
    <property type="match status" value="1"/>
</dbReference>
<keyword id="KW-0378">Hydrolase</keyword>
<gene>
    <name evidence="1" type="primary">folE2-2</name>
    <name type="ordered locus">Bcep18194_B2210</name>
</gene>
<reference key="1">
    <citation type="submission" date="2005-10" db="EMBL/GenBank/DDBJ databases">
        <title>Complete sequence of chromosome 2 of Burkholderia sp. 383.</title>
        <authorList>
            <consortium name="US DOE Joint Genome Institute"/>
            <person name="Copeland A."/>
            <person name="Lucas S."/>
            <person name="Lapidus A."/>
            <person name="Barry K."/>
            <person name="Detter J.C."/>
            <person name="Glavina T."/>
            <person name="Hammon N."/>
            <person name="Israni S."/>
            <person name="Pitluck S."/>
            <person name="Chain P."/>
            <person name="Malfatti S."/>
            <person name="Shin M."/>
            <person name="Vergez L."/>
            <person name="Schmutz J."/>
            <person name="Larimer F."/>
            <person name="Land M."/>
            <person name="Kyrpides N."/>
            <person name="Lykidis A."/>
            <person name="Richardson P."/>
        </authorList>
    </citation>
    <scope>NUCLEOTIDE SEQUENCE [LARGE SCALE GENOMIC DNA]</scope>
    <source>
        <strain>ATCC 17760 / DSM 23089 / LMG 22485 / NCIMB 9086 / R18194 / 383</strain>
    </source>
</reference>
<organism>
    <name type="scientific">Burkholderia lata (strain ATCC 17760 / DSM 23089 / LMG 22485 / NCIMB 9086 / R18194 / 383)</name>
    <dbReference type="NCBI Taxonomy" id="482957"/>
    <lineage>
        <taxon>Bacteria</taxon>
        <taxon>Pseudomonadati</taxon>
        <taxon>Pseudomonadota</taxon>
        <taxon>Betaproteobacteria</taxon>
        <taxon>Burkholderiales</taxon>
        <taxon>Burkholderiaceae</taxon>
        <taxon>Burkholderia</taxon>
        <taxon>Burkholderia cepacia complex</taxon>
    </lineage>
</organism>
<proteinExistence type="inferred from homology"/>
<sequence>MNQMNPAFVMPDVQSTVDTRQIPIQRVGVKAVRHPLTVCTESGDVQPTVGVWNLDVRLPADQKGTHMSRFVALLEENRAPLTVERFRAMLASMLEKLEAEAGRIEVTFPYFVNKTAPVSGVQSLLDYEVTLAGESRNGDTRLFLKVLVPVTSLCPCSKKISQYGAHNQRSHVTIDAELAADLPVEALIRIAEEEASCELWGLLKRPDEKFVTERAYENPKFVEDLVRDVAQRLDADERVAAYVLEAENFESIHNHSAYALIERDKRQAA</sequence>
<protein>
    <recommendedName>
        <fullName evidence="1">GTP cyclohydrolase FolE2 2</fullName>
        <ecNumber evidence="1">3.5.4.16</ecNumber>
    </recommendedName>
</protein>
<feature type="chain" id="PRO_0000289481" description="GTP cyclohydrolase FolE2 2">
    <location>
        <begin position="1"/>
        <end position="269"/>
    </location>
</feature>
<feature type="site" description="May be catalytically important" evidence="1">
    <location>
        <position position="154"/>
    </location>
</feature>
<comment type="function">
    <text evidence="1">Converts GTP to 7,8-dihydroneopterin triphosphate.</text>
</comment>
<comment type="catalytic activity">
    <reaction evidence="1">
        <text>GTP + H2O = 7,8-dihydroneopterin 3'-triphosphate + formate + H(+)</text>
        <dbReference type="Rhea" id="RHEA:17473"/>
        <dbReference type="ChEBI" id="CHEBI:15377"/>
        <dbReference type="ChEBI" id="CHEBI:15378"/>
        <dbReference type="ChEBI" id="CHEBI:15740"/>
        <dbReference type="ChEBI" id="CHEBI:37565"/>
        <dbReference type="ChEBI" id="CHEBI:58462"/>
        <dbReference type="EC" id="3.5.4.16"/>
    </reaction>
</comment>
<comment type="pathway">
    <text evidence="1">Cofactor biosynthesis; 7,8-dihydroneopterin triphosphate biosynthesis; 7,8-dihydroneopterin triphosphate from GTP: step 1/1.</text>
</comment>
<comment type="similarity">
    <text evidence="1">Belongs to the GTP cyclohydrolase IV family.</text>
</comment>